<feature type="chain" id="PRO_0000131348" description="Large ribosomal subunit protein uL18">
    <location>
        <begin position="1"/>
        <end position="120"/>
    </location>
</feature>
<organism>
    <name type="scientific">Staphylococcus epidermidis (strain ATCC 12228 / FDA PCI 1200)</name>
    <dbReference type="NCBI Taxonomy" id="176280"/>
    <lineage>
        <taxon>Bacteria</taxon>
        <taxon>Bacillati</taxon>
        <taxon>Bacillota</taxon>
        <taxon>Bacilli</taxon>
        <taxon>Bacillales</taxon>
        <taxon>Staphylococcaceae</taxon>
        <taxon>Staphylococcus</taxon>
    </lineage>
</organism>
<protein>
    <recommendedName>
        <fullName evidence="1">Large ribosomal subunit protein uL18</fullName>
    </recommendedName>
    <alternativeName>
        <fullName evidence="2">50S ribosomal protein L18</fullName>
    </alternativeName>
</protein>
<comment type="function">
    <text evidence="1">This is one of the proteins that bind and probably mediate the attachment of the 5S RNA into the large ribosomal subunit, where it forms part of the central protuberance.</text>
</comment>
<comment type="subunit">
    <text evidence="1">Part of the 50S ribosomal subunit; part of the 5S rRNA/L5/L18/L25 subcomplex. Contacts the 5S and 23S rRNAs.</text>
</comment>
<comment type="similarity">
    <text evidence="1">Belongs to the universal ribosomal protein uL18 family.</text>
</comment>
<evidence type="ECO:0000255" key="1">
    <source>
        <dbReference type="HAMAP-Rule" id="MF_01337"/>
    </source>
</evidence>
<evidence type="ECO:0000305" key="2"/>
<name>RL18_STAES</name>
<gene>
    <name evidence="1" type="primary">rplR</name>
    <name type="ordered locus">SE_1807</name>
</gene>
<accession>Q8CRH6</accession>
<reference key="1">
    <citation type="journal article" date="2003" name="Mol. Microbiol.">
        <title>Genome-based analysis of virulence genes in a non-biofilm-forming Staphylococcus epidermidis strain (ATCC 12228).</title>
        <authorList>
            <person name="Zhang Y.-Q."/>
            <person name="Ren S.-X."/>
            <person name="Li H.-L."/>
            <person name="Wang Y.-X."/>
            <person name="Fu G."/>
            <person name="Yang J."/>
            <person name="Qin Z.-Q."/>
            <person name="Miao Y.-G."/>
            <person name="Wang W.-Y."/>
            <person name="Chen R.-S."/>
            <person name="Shen Y."/>
            <person name="Chen Z."/>
            <person name="Yuan Z.-H."/>
            <person name="Zhao G.-P."/>
            <person name="Qu D."/>
            <person name="Danchin A."/>
            <person name="Wen Y.-M."/>
        </authorList>
    </citation>
    <scope>NUCLEOTIDE SEQUENCE [LARGE SCALE GENOMIC DNA]</scope>
    <source>
        <strain>ATCC 12228 / FDA PCI 1200</strain>
    </source>
</reference>
<proteinExistence type="inferred from homology"/>
<sequence>MISKIDKNKVRLKRHARVRTKLSGTAEKPRLNVYRSNKHIYAQIIDDVKGVTLAQASSQDKDIANTSASKVDLATTVGQEIAKKANDKGIKEIVFDRGGYLYHGRVKALADAARENGLEF</sequence>
<keyword id="KW-0687">Ribonucleoprotein</keyword>
<keyword id="KW-0689">Ribosomal protein</keyword>
<keyword id="KW-0694">RNA-binding</keyword>
<keyword id="KW-0699">rRNA-binding</keyword>
<dbReference type="EMBL" id="AE015929">
    <property type="protein sequence ID" value="AAO05448.1"/>
    <property type="molecule type" value="Genomic_DNA"/>
</dbReference>
<dbReference type="RefSeq" id="NP_765362.1">
    <property type="nucleotide sequence ID" value="NC_004461.1"/>
</dbReference>
<dbReference type="RefSeq" id="WP_001829747.1">
    <property type="nucleotide sequence ID" value="NZ_WBME01000007.1"/>
</dbReference>
<dbReference type="SMR" id="Q8CRH6"/>
<dbReference type="GeneID" id="50018089"/>
<dbReference type="KEGG" id="sep:SE_1807"/>
<dbReference type="PATRIC" id="fig|176280.10.peg.1764"/>
<dbReference type="eggNOG" id="COG0256">
    <property type="taxonomic scope" value="Bacteria"/>
</dbReference>
<dbReference type="HOGENOM" id="CLU_098841_0_1_9"/>
<dbReference type="OrthoDB" id="9810939at2"/>
<dbReference type="Proteomes" id="UP000001411">
    <property type="component" value="Chromosome"/>
</dbReference>
<dbReference type="GO" id="GO:0022625">
    <property type="term" value="C:cytosolic large ribosomal subunit"/>
    <property type="evidence" value="ECO:0007669"/>
    <property type="project" value="TreeGrafter"/>
</dbReference>
<dbReference type="GO" id="GO:0008097">
    <property type="term" value="F:5S rRNA binding"/>
    <property type="evidence" value="ECO:0007669"/>
    <property type="project" value="TreeGrafter"/>
</dbReference>
<dbReference type="GO" id="GO:0003735">
    <property type="term" value="F:structural constituent of ribosome"/>
    <property type="evidence" value="ECO:0007669"/>
    <property type="project" value="InterPro"/>
</dbReference>
<dbReference type="GO" id="GO:0006412">
    <property type="term" value="P:translation"/>
    <property type="evidence" value="ECO:0007669"/>
    <property type="project" value="UniProtKB-UniRule"/>
</dbReference>
<dbReference type="CDD" id="cd00432">
    <property type="entry name" value="Ribosomal_L18_L5e"/>
    <property type="match status" value="1"/>
</dbReference>
<dbReference type="FunFam" id="3.30.420.100:FF:000001">
    <property type="entry name" value="50S ribosomal protein L18"/>
    <property type="match status" value="1"/>
</dbReference>
<dbReference type="Gene3D" id="3.30.420.100">
    <property type="match status" value="1"/>
</dbReference>
<dbReference type="HAMAP" id="MF_01337_B">
    <property type="entry name" value="Ribosomal_uL18_B"/>
    <property type="match status" value="1"/>
</dbReference>
<dbReference type="InterPro" id="IPR004389">
    <property type="entry name" value="Ribosomal_uL18_bac-type"/>
</dbReference>
<dbReference type="InterPro" id="IPR005484">
    <property type="entry name" value="Ribosomal_uL18_bac/euk"/>
</dbReference>
<dbReference type="NCBIfam" id="TIGR00060">
    <property type="entry name" value="L18_bact"/>
    <property type="match status" value="1"/>
</dbReference>
<dbReference type="PANTHER" id="PTHR12899">
    <property type="entry name" value="39S RIBOSOMAL PROTEIN L18, MITOCHONDRIAL"/>
    <property type="match status" value="1"/>
</dbReference>
<dbReference type="PANTHER" id="PTHR12899:SF3">
    <property type="entry name" value="LARGE RIBOSOMAL SUBUNIT PROTEIN UL18M"/>
    <property type="match status" value="1"/>
</dbReference>
<dbReference type="Pfam" id="PF00861">
    <property type="entry name" value="Ribosomal_L18p"/>
    <property type="match status" value="1"/>
</dbReference>
<dbReference type="SUPFAM" id="SSF53137">
    <property type="entry name" value="Translational machinery components"/>
    <property type="match status" value="1"/>
</dbReference>